<gene>
    <name evidence="1" type="primary">dnaJ</name>
    <name type="ordered locus">Rsph17025_2765</name>
</gene>
<name>DNAJ_CERS5</name>
<sequence>MAKRDYYEVLGVSRGASADELKKAYRTKAKELHPDRNADNPQAEAQFKEVNEAYDVLRDADKKAAYDRYGHAAFEGGMGGGGGARGAYGQQADFASAFSDVFEDLFGDFMGGRGGAARSRAQRGSDLRYNLRVTLDEAYRGVQKTINVPASVACDSCKGTGAEGGAEPVTCPTCSGMGKVRAQQGFFTVERTCPTCNGMGQIVKNPCKSCHGAGRVEKERTLSVNIPAGVETGTRIRLAGEGEAGMRGGPSGDLYIFIEVREHALFQRDGVHLFCRVPVSITAAALGGEVEVPTIDGGSSRVKIPAGSQTGKQMRLRGKGMPALRGGGAGDMLIELAVETPVNLTARQKELLREFEKLSEDNNPEGKSFFSKVKGFWDGMTG</sequence>
<accession>A4WW88</accession>
<feature type="chain" id="PRO_1000085270" description="Chaperone protein DnaJ">
    <location>
        <begin position="1"/>
        <end position="382"/>
    </location>
</feature>
<feature type="domain" description="J" evidence="1">
    <location>
        <begin position="5"/>
        <end position="70"/>
    </location>
</feature>
<feature type="repeat" description="CXXCXGXG motif">
    <location>
        <begin position="154"/>
        <end position="161"/>
    </location>
</feature>
<feature type="repeat" description="CXXCXGXG motif">
    <location>
        <begin position="171"/>
        <end position="178"/>
    </location>
</feature>
<feature type="repeat" description="CXXCXGXG motif">
    <location>
        <begin position="193"/>
        <end position="200"/>
    </location>
</feature>
<feature type="repeat" description="CXXCXGXG motif">
    <location>
        <begin position="207"/>
        <end position="214"/>
    </location>
</feature>
<feature type="zinc finger region" description="CR-type" evidence="1">
    <location>
        <begin position="141"/>
        <end position="219"/>
    </location>
</feature>
<feature type="binding site" evidence="1">
    <location>
        <position position="154"/>
    </location>
    <ligand>
        <name>Zn(2+)</name>
        <dbReference type="ChEBI" id="CHEBI:29105"/>
        <label>1</label>
    </ligand>
</feature>
<feature type="binding site" evidence="1">
    <location>
        <position position="157"/>
    </location>
    <ligand>
        <name>Zn(2+)</name>
        <dbReference type="ChEBI" id="CHEBI:29105"/>
        <label>1</label>
    </ligand>
</feature>
<feature type="binding site" evidence="1">
    <location>
        <position position="171"/>
    </location>
    <ligand>
        <name>Zn(2+)</name>
        <dbReference type="ChEBI" id="CHEBI:29105"/>
        <label>2</label>
    </ligand>
</feature>
<feature type="binding site" evidence="1">
    <location>
        <position position="174"/>
    </location>
    <ligand>
        <name>Zn(2+)</name>
        <dbReference type="ChEBI" id="CHEBI:29105"/>
        <label>2</label>
    </ligand>
</feature>
<feature type="binding site" evidence="1">
    <location>
        <position position="193"/>
    </location>
    <ligand>
        <name>Zn(2+)</name>
        <dbReference type="ChEBI" id="CHEBI:29105"/>
        <label>2</label>
    </ligand>
</feature>
<feature type="binding site" evidence="1">
    <location>
        <position position="196"/>
    </location>
    <ligand>
        <name>Zn(2+)</name>
        <dbReference type="ChEBI" id="CHEBI:29105"/>
        <label>2</label>
    </ligand>
</feature>
<feature type="binding site" evidence="1">
    <location>
        <position position="207"/>
    </location>
    <ligand>
        <name>Zn(2+)</name>
        <dbReference type="ChEBI" id="CHEBI:29105"/>
        <label>1</label>
    </ligand>
</feature>
<feature type="binding site" evidence="1">
    <location>
        <position position="210"/>
    </location>
    <ligand>
        <name>Zn(2+)</name>
        <dbReference type="ChEBI" id="CHEBI:29105"/>
        <label>1</label>
    </ligand>
</feature>
<proteinExistence type="inferred from homology"/>
<dbReference type="EMBL" id="CP000661">
    <property type="protein sequence ID" value="ABP71652.1"/>
    <property type="molecule type" value="Genomic_DNA"/>
</dbReference>
<dbReference type="SMR" id="A4WW88"/>
<dbReference type="STRING" id="349102.Rsph17025_2765"/>
<dbReference type="KEGG" id="rsq:Rsph17025_2765"/>
<dbReference type="eggNOG" id="COG0484">
    <property type="taxonomic scope" value="Bacteria"/>
</dbReference>
<dbReference type="HOGENOM" id="CLU_017633_0_7_5"/>
<dbReference type="BioCyc" id="RSPH349102:G1G8M-2846-MONOMER"/>
<dbReference type="GO" id="GO:0005737">
    <property type="term" value="C:cytoplasm"/>
    <property type="evidence" value="ECO:0007669"/>
    <property type="project" value="UniProtKB-SubCell"/>
</dbReference>
<dbReference type="GO" id="GO:0005524">
    <property type="term" value="F:ATP binding"/>
    <property type="evidence" value="ECO:0007669"/>
    <property type="project" value="InterPro"/>
</dbReference>
<dbReference type="GO" id="GO:0031072">
    <property type="term" value="F:heat shock protein binding"/>
    <property type="evidence" value="ECO:0007669"/>
    <property type="project" value="InterPro"/>
</dbReference>
<dbReference type="GO" id="GO:0051082">
    <property type="term" value="F:unfolded protein binding"/>
    <property type="evidence" value="ECO:0007669"/>
    <property type="project" value="UniProtKB-UniRule"/>
</dbReference>
<dbReference type="GO" id="GO:0008270">
    <property type="term" value="F:zinc ion binding"/>
    <property type="evidence" value="ECO:0007669"/>
    <property type="project" value="UniProtKB-UniRule"/>
</dbReference>
<dbReference type="GO" id="GO:0051085">
    <property type="term" value="P:chaperone cofactor-dependent protein refolding"/>
    <property type="evidence" value="ECO:0007669"/>
    <property type="project" value="TreeGrafter"/>
</dbReference>
<dbReference type="GO" id="GO:0006260">
    <property type="term" value="P:DNA replication"/>
    <property type="evidence" value="ECO:0007669"/>
    <property type="project" value="UniProtKB-KW"/>
</dbReference>
<dbReference type="GO" id="GO:0042026">
    <property type="term" value="P:protein refolding"/>
    <property type="evidence" value="ECO:0007669"/>
    <property type="project" value="TreeGrafter"/>
</dbReference>
<dbReference type="GO" id="GO:0009408">
    <property type="term" value="P:response to heat"/>
    <property type="evidence" value="ECO:0007669"/>
    <property type="project" value="InterPro"/>
</dbReference>
<dbReference type="CDD" id="cd06257">
    <property type="entry name" value="DnaJ"/>
    <property type="match status" value="1"/>
</dbReference>
<dbReference type="CDD" id="cd10747">
    <property type="entry name" value="DnaJ_C"/>
    <property type="match status" value="1"/>
</dbReference>
<dbReference type="CDD" id="cd10719">
    <property type="entry name" value="DnaJ_zf"/>
    <property type="match status" value="1"/>
</dbReference>
<dbReference type="FunFam" id="1.10.287.110:FF:000034">
    <property type="entry name" value="Chaperone protein DnaJ"/>
    <property type="match status" value="1"/>
</dbReference>
<dbReference type="FunFam" id="2.10.230.10:FF:000002">
    <property type="entry name" value="Molecular chaperone DnaJ"/>
    <property type="match status" value="1"/>
</dbReference>
<dbReference type="FunFam" id="2.60.260.20:FF:000004">
    <property type="entry name" value="Molecular chaperone DnaJ"/>
    <property type="match status" value="1"/>
</dbReference>
<dbReference type="Gene3D" id="1.10.287.110">
    <property type="entry name" value="DnaJ domain"/>
    <property type="match status" value="1"/>
</dbReference>
<dbReference type="Gene3D" id="2.10.230.10">
    <property type="entry name" value="Heat shock protein DnaJ, cysteine-rich domain"/>
    <property type="match status" value="1"/>
</dbReference>
<dbReference type="Gene3D" id="2.60.260.20">
    <property type="entry name" value="Urease metallochaperone UreE, N-terminal domain"/>
    <property type="match status" value="2"/>
</dbReference>
<dbReference type="HAMAP" id="MF_01152">
    <property type="entry name" value="DnaJ"/>
    <property type="match status" value="1"/>
</dbReference>
<dbReference type="InterPro" id="IPR012724">
    <property type="entry name" value="DnaJ"/>
</dbReference>
<dbReference type="InterPro" id="IPR002939">
    <property type="entry name" value="DnaJ_C"/>
</dbReference>
<dbReference type="InterPro" id="IPR001623">
    <property type="entry name" value="DnaJ_domain"/>
</dbReference>
<dbReference type="InterPro" id="IPR018253">
    <property type="entry name" value="DnaJ_domain_CS"/>
</dbReference>
<dbReference type="InterPro" id="IPR008971">
    <property type="entry name" value="HSP40/DnaJ_pept-bd"/>
</dbReference>
<dbReference type="InterPro" id="IPR001305">
    <property type="entry name" value="HSP_DnaJ_Cys-rich_dom"/>
</dbReference>
<dbReference type="InterPro" id="IPR036410">
    <property type="entry name" value="HSP_DnaJ_Cys-rich_dom_sf"/>
</dbReference>
<dbReference type="InterPro" id="IPR036869">
    <property type="entry name" value="J_dom_sf"/>
</dbReference>
<dbReference type="NCBIfam" id="TIGR02349">
    <property type="entry name" value="DnaJ_bact"/>
    <property type="match status" value="1"/>
</dbReference>
<dbReference type="NCBIfam" id="NF008035">
    <property type="entry name" value="PRK10767.1"/>
    <property type="match status" value="1"/>
</dbReference>
<dbReference type="PANTHER" id="PTHR43096:SF48">
    <property type="entry name" value="CHAPERONE PROTEIN DNAJ"/>
    <property type="match status" value="1"/>
</dbReference>
<dbReference type="PANTHER" id="PTHR43096">
    <property type="entry name" value="DNAJ HOMOLOG 1, MITOCHONDRIAL-RELATED"/>
    <property type="match status" value="1"/>
</dbReference>
<dbReference type="Pfam" id="PF00226">
    <property type="entry name" value="DnaJ"/>
    <property type="match status" value="1"/>
</dbReference>
<dbReference type="Pfam" id="PF01556">
    <property type="entry name" value="DnaJ_C"/>
    <property type="match status" value="1"/>
</dbReference>
<dbReference type="Pfam" id="PF00684">
    <property type="entry name" value="DnaJ_CXXCXGXG"/>
    <property type="match status" value="1"/>
</dbReference>
<dbReference type="PRINTS" id="PR00625">
    <property type="entry name" value="JDOMAIN"/>
</dbReference>
<dbReference type="SMART" id="SM00271">
    <property type="entry name" value="DnaJ"/>
    <property type="match status" value="1"/>
</dbReference>
<dbReference type="SUPFAM" id="SSF46565">
    <property type="entry name" value="Chaperone J-domain"/>
    <property type="match status" value="1"/>
</dbReference>
<dbReference type="SUPFAM" id="SSF57938">
    <property type="entry name" value="DnaJ/Hsp40 cysteine-rich domain"/>
    <property type="match status" value="1"/>
</dbReference>
<dbReference type="SUPFAM" id="SSF49493">
    <property type="entry name" value="HSP40/DnaJ peptide-binding domain"/>
    <property type="match status" value="2"/>
</dbReference>
<dbReference type="PROSITE" id="PS00636">
    <property type="entry name" value="DNAJ_1"/>
    <property type="match status" value="1"/>
</dbReference>
<dbReference type="PROSITE" id="PS50076">
    <property type="entry name" value="DNAJ_2"/>
    <property type="match status" value="1"/>
</dbReference>
<dbReference type="PROSITE" id="PS51188">
    <property type="entry name" value="ZF_CR"/>
    <property type="match status" value="1"/>
</dbReference>
<comment type="function">
    <text evidence="1">Participates actively in the response to hyperosmotic and heat shock by preventing the aggregation of stress-denatured proteins and by disaggregating proteins, also in an autonomous, DnaK-independent fashion. Unfolded proteins bind initially to DnaJ; upon interaction with the DnaJ-bound protein, DnaK hydrolyzes its bound ATP, resulting in the formation of a stable complex. GrpE releases ADP from DnaK; ATP binding to DnaK triggers the release of the substrate protein, thus completing the reaction cycle. Several rounds of ATP-dependent interactions between DnaJ, DnaK and GrpE are required for fully efficient folding. Also involved, together with DnaK and GrpE, in the DNA replication of plasmids through activation of initiation proteins.</text>
</comment>
<comment type="cofactor">
    <cofactor evidence="1">
        <name>Zn(2+)</name>
        <dbReference type="ChEBI" id="CHEBI:29105"/>
    </cofactor>
    <text evidence="1">Binds 2 Zn(2+) ions per monomer.</text>
</comment>
<comment type="subunit">
    <text evidence="1">Homodimer.</text>
</comment>
<comment type="subcellular location">
    <subcellularLocation>
        <location evidence="1">Cytoplasm</location>
    </subcellularLocation>
</comment>
<comment type="domain">
    <text evidence="1">The J domain is necessary and sufficient to stimulate DnaK ATPase activity. Zinc center 1 plays an important role in the autonomous, DnaK-independent chaperone activity of DnaJ. Zinc center 2 is essential for interaction with DnaK and for DnaJ activity.</text>
</comment>
<comment type="similarity">
    <text evidence="1">Belongs to the DnaJ family.</text>
</comment>
<reference key="1">
    <citation type="submission" date="2007-04" db="EMBL/GenBank/DDBJ databases">
        <title>Complete sequence of chromosome of Rhodobacter sphaeroides ATCC 17025.</title>
        <authorList>
            <consortium name="US DOE Joint Genome Institute"/>
            <person name="Copeland A."/>
            <person name="Lucas S."/>
            <person name="Lapidus A."/>
            <person name="Barry K."/>
            <person name="Detter J.C."/>
            <person name="Glavina del Rio T."/>
            <person name="Hammon N."/>
            <person name="Israni S."/>
            <person name="Dalin E."/>
            <person name="Tice H."/>
            <person name="Pitluck S."/>
            <person name="Chertkov O."/>
            <person name="Brettin T."/>
            <person name="Bruce D."/>
            <person name="Han C."/>
            <person name="Schmutz J."/>
            <person name="Larimer F."/>
            <person name="Land M."/>
            <person name="Hauser L."/>
            <person name="Kyrpides N."/>
            <person name="Kim E."/>
            <person name="Richardson P."/>
            <person name="Mackenzie C."/>
            <person name="Choudhary M."/>
            <person name="Donohue T.J."/>
            <person name="Kaplan S."/>
        </authorList>
    </citation>
    <scope>NUCLEOTIDE SEQUENCE [LARGE SCALE GENOMIC DNA]</scope>
    <source>
        <strain>ATCC 17025 / ATH 2.4.3</strain>
    </source>
</reference>
<protein>
    <recommendedName>
        <fullName evidence="1">Chaperone protein DnaJ</fullName>
    </recommendedName>
</protein>
<evidence type="ECO:0000255" key="1">
    <source>
        <dbReference type="HAMAP-Rule" id="MF_01152"/>
    </source>
</evidence>
<keyword id="KW-0143">Chaperone</keyword>
<keyword id="KW-0963">Cytoplasm</keyword>
<keyword id="KW-0235">DNA replication</keyword>
<keyword id="KW-0479">Metal-binding</keyword>
<keyword id="KW-0677">Repeat</keyword>
<keyword id="KW-0346">Stress response</keyword>
<keyword id="KW-0862">Zinc</keyword>
<keyword id="KW-0863">Zinc-finger</keyword>
<organism>
    <name type="scientific">Cereibacter sphaeroides (strain ATCC 17025 / ATH 2.4.3)</name>
    <name type="common">Rhodobacter sphaeroides</name>
    <dbReference type="NCBI Taxonomy" id="349102"/>
    <lineage>
        <taxon>Bacteria</taxon>
        <taxon>Pseudomonadati</taxon>
        <taxon>Pseudomonadota</taxon>
        <taxon>Alphaproteobacteria</taxon>
        <taxon>Rhodobacterales</taxon>
        <taxon>Paracoccaceae</taxon>
        <taxon>Cereibacter</taxon>
    </lineage>
</organism>